<protein>
    <recommendedName>
        <fullName>Probable calcium-binding protein CML28</fullName>
    </recommendedName>
    <alternativeName>
        <fullName>Calmodulin-like protein 28</fullName>
    </alternativeName>
</protein>
<proteinExistence type="inferred from homology"/>
<name>CML28_ARATH</name>
<feature type="chain" id="PRO_0000073664" description="Probable calcium-binding protein CML28">
    <location>
        <begin position="1"/>
        <end position="83"/>
    </location>
</feature>
<feature type="domain" description="EF-hand 1" evidence="2">
    <location>
        <begin position="5"/>
        <end position="40"/>
    </location>
</feature>
<feature type="domain" description="EF-hand 2" evidence="2">
    <location>
        <begin position="43"/>
        <end position="75"/>
    </location>
</feature>
<feature type="binding site" evidence="2">
    <location>
        <position position="18"/>
    </location>
    <ligand>
        <name>Ca(2+)</name>
        <dbReference type="ChEBI" id="CHEBI:29108"/>
        <label>1</label>
    </ligand>
</feature>
<feature type="binding site" evidence="2">
    <location>
        <position position="20"/>
    </location>
    <ligand>
        <name>Ca(2+)</name>
        <dbReference type="ChEBI" id="CHEBI:29108"/>
        <label>1</label>
    </ligand>
</feature>
<feature type="binding site" evidence="2">
    <location>
        <position position="22"/>
    </location>
    <ligand>
        <name>Ca(2+)</name>
        <dbReference type="ChEBI" id="CHEBI:29108"/>
        <label>1</label>
    </ligand>
</feature>
<feature type="binding site" evidence="2">
    <location>
        <position position="24"/>
    </location>
    <ligand>
        <name>Ca(2+)</name>
        <dbReference type="ChEBI" id="CHEBI:29108"/>
        <label>1</label>
    </ligand>
</feature>
<feature type="binding site" evidence="2">
    <location>
        <position position="29"/>
    </location>
    <ligand>
        <name>Ca(2+)</name>
        <dbReference type="ChEBI" id="CHEBI:29108"/>
        <label>1</label>
    </ligand>
</feature>
<feature type="binding site" evidence="2">
    <location>
        <position position="53"/>
    </location>
    <ligand>
        <name>Ca(2+)</name>
        <dbReference type="ChEBI" id="CHEBI:29108"/>
        <label>2</label>
    </ligand>
</feature>
<feature type="binding site" evidence="2">
    <location>
        <position position="55"/>
    </location>
    <ligand>
        <name>Ca(2+)</name>
        <dbReference type="ChEBI" id="CHEBI:29108"/>
        <label>2</label>
    </ligand>
</feature>
<feature type="binding site" evidence="2">
    <location>
        <position position="57"/>
    </location>
    <ligand>
        <name>Ca(2+)</name>
        <dbReference type="ChEBI" id="CHEBI:29108"/>
        <label>2</label>
    </ligand>
</feature>
<feature type="binding site" evidence="2">
    <location>
        <position position="59"/>
    </location>
    <ligand>
        <name>Ca(2+)</name>
        <dbReference type="ChEBI" id="CHEBI:29108"/>
        <label>2</label>
    </ligand>
</feature>
<feature type="binding site" evidence="2">
    <location>
        <position position="64"/>
    </location>
    <ligand>
        <name>Ca(2+)</name>
        <dbReference type="ChEBI" id="CHEBI:29108"/>
        <label>2</label>
    </ligand>
</feature>
<dbReference type="EMBL" id="AC009895">
    <property type="protein sequence ID" value="AAF01603.1"/>
    <property type="molecule type" value="Genomic_DNA"/>
</dbReference>
<dbReference type="EMBL" id="CP002686">
    <property type="protein sequence ID" value="AEE73943.1"/>
    <property type="molecule type" value="Genomic_DNA"/>
</dbReference>
<dbReference type="EMBL" id="BT029351">
    <property type="protein sequence ID" value="ABK32165.1"/>
    <property type="molecule type" value="mRNA"/>
</dbReference>
<dbReference type="RefSeq" id="NP_001319459.1">
    <property type="nucleotide sequence ID" value="NM_001337471.1"/>
</dbReference>
<dbReference type="SMR" id="Q9SRP7"/>
<dbReference type="FunCoup" id="Q9SRP7">
    <property type="interactions" value="251"/>
</dbReference>
<dbReference type="STRING" id="3702.Q9SRP7"/>
<dbReference type="PaxDb" id="3702-AT3G03430.1"/>
<dbReference type="ProteomicsDB" id="241002"/>
<dbReference type="DNASU" id="821255"/>
<dbReference type="EnsemblPlants" id="AT3G03430.1">
    <property type="protein sequence ID" value="AT3G03430.1"/>
    <property type="gene ID" value="AT3G03430"/>
</dbReference>
<dbReference type="GeneID" id="28718660"/>
<dbReference type="Gramene" id="AT3G03430.1">
    <property type="protein sequence ID" value="AT3G03430.1"/>
    <property type="gene ID" value="AT3G03430"/>
</dbReference>
<dbReference type="KEGG" id="ath:AT3G03430"/>
<dbReference type="Araport" id="AT3G03430"/>
<dbReference type="TAIR" id="AT3G03430"/>
<dbReference type="eggNOG" id="KOG0027">
    <property type="taxonomic scope" value="Eukaryota"/>
</dbReference>
<dbReference type="HOGENOM" id="CLU_061288_22_5_1"/>
<dbReference type="InParanoid" id="Q9SRP7"/>
<dbReference type="OMA" id="DFAHANA"/>
<dbReference type="OrthoDB" id="26525at2759"/>
<dbReference type="PhylomeDB" id="Q9SRP7"/>
<dbReference type="PRO" id="PR:Q9SRP7"/>
<dbReference type="Proteomes" id="UP000006548">
    <property type="component" value="Chromosome 3"/>
</dbReference>
<dbReference type="ExpressionAtlas" id="Q9SRP7">
    <property type="expression patterns" value="baseline and differential"/>
</dbReference>
<dbReference type="GO" id="GO:0005737">
    <property type="term" value="C:cytoplasm"/>
    <property type="evidence" value="ECO:0000314"/>
    <property type="project" value="TAIR"/>
</dbReference>
<dbReference type="GO" id="GO:0005509">
    <property type="term" value="F:calcium ion binding"/>
    <property type="evidence" value="ECO:0007669"/>
    <property type="project" value="InterPro"/>
</dbReference>
<dbReference type="CDD" id="cd00051">
    <property type="entry name" value="EFh"/>
    <property type="match status" value="1"/>
</dbReference>
<dbReference type="FunFam" id="1.10.238.10:FF:000198">
    <property type="entry name" value="Polcalcin Phl p 7"/>
    <property type="match status" value="1"/>
</dbReference>
<dbReference type="Gene3D" id="1.10.238.10">
    <property type="entry name" value="EF-hand"/>
    <property type="match status" value="1"/>
</dbReference>
<dbReference type="InterPro" id="IPR011992">
    <property type="entry name" value="EF-hand-dom_pair"/>
</dbReference>
<dbReference type="InterPro" id="IPR018247">
    <property type="entry name" value="EF_Hand_1_Ca_BS"/>
</dbReference>
<dbReference type="InterPro" id="IPR002048">
    <property type="entry name" value="EF_hand_dom"/>
</dbReference>
<dbReference type="InterPro" id="IPR039647">
    <property type="entry name" value="EF_hand_pair_protein_CML-like"/>
</dbReference>
<dbReference type="PANTHER" id="PTHR10891">
    <property type="entry name" value="EF-HAND CALCIUM-BINDING DOMAIN CONTAINING PROTEIN"/>
    <property type="match status" value="1"/>
</dbReference>
<dbReference type="Pfam" id="PF13499">
    <property type="entry name" value="EF-hand_7"/>
    <property type="match status" value="1"/>
</dbReference>
<dbReference type="SMART" id="SM00054">
    <property type="entry name" value="EFh"/>
    <property type="match status" value="2"/>
</dbReference>
<dbReference type="SUPFAM" id="SSF47473">
    <property type="entry name" value="EF-hand"/>
    <property type="match status" value="1"/>
</dbReference>
<dbReference type="PROSITE" id="PS00018">
    <property type="entry name" value="EF_HAND_1"/>
    <property type="match status" value="2"/>
</dbReference>
<dbReference type="PROSITE" id="PS50222">
    <property type="entry name" value="EF_HAND_2"/>
    <property type="match status" value="2"/>
</dbReference>
<accession>Q9SRP7</accession>
<accession>A0JPY1</accession>
<sequence length="83" mass="9160">MADATEKAEHDRIFKKFDANGDGKISAAELGDALKNLGSVTHEDIKRMMAEIDTDGDGYISYQEFIDFASANRGLMKDVAKIF</sequence>
<comment type="function">
    <text evidence="1">Potential calcium sensor.</text>
</comment>
<comment type="caution">
    <text evidence="3">Although assigned as a calmodulin family member by Ref.4, it only contains EF-hand domains.</text>
</comment>
<organism>
    <name type="scientific">Arabidopsis thaliana</name>
    <name type="common">Mouse-ear cress</name>
    <dbReference type="NCBI Taxonomy" id="3702"/>
    <lineage>
        <taxon>Eukaryota</taxon>
        <taxon>Viridiplantae</taxon>
        <taxon>Streptophyta</taxon>
        <taxon>Embryophyta</taxon>
        <taxon>Tracheophyta</taxon>
        <taxon>Spermatophyta</taxon>
        <taxon>Magnoliopsida</taxon>
        <taxon>eudicotyledons</taxon>
        <taxon>Gunneridae</taxon>
        <taxon>Pentapetalae</taxon>
        <taxon>rosids</taxon>
        <taxon>malvids</taxon>
        <taxon>Brassicales</taxon>
        <taxon>Brassicaceae</taxon>
        <taxon>Camelineae</taxon>
        <taxon>Arabidopsis</taxon>
    </lineage>
</organism>
<evidence type="ECO:0000250" key="1"/>
<evidence type="ECO:0000255" key="2">
    <source>
        <dbReference type="PROSITE-ProRule" id="PRU00448"/>
    </source>
</evidence>
<evidence type="ECO:0000305" key="3"/>
<keyword id="KW-0106">Calcium</keyword>
<keyword id="KW-0479">Metal-binding</keyword>
<keyword id="KW-1185">Reference proteome</keyword>
<keyword id="KW-0677">Repeat</keyword>
<reference key="1">
    <citation type="journal article" date="2000" name="Nature">
        <title>Sequence and analysis of chromosome 3 of the plant Arabidopsis thaliana.</title>
        <authorList>
            <person name="Salanoubat M."/>
            <person name="Lemcke K."/>
            <person name="Rieger M."/>
            <person name="Ansorge W."/>
            <person name="Unseld M."/>
            <person name="Fartmann B."/>
            <person name="Valle G."/>
            <person name="Bloecker H."/>
            <person name="Perez-Alonso M."/>
            <person name="Obermaier B."/>
            <person name="Delseny M."/>
            <person name="Boutry M."/>
            <person name="Grivell L.A."/>
            <person name="Mache R."/>
            <person name="Puigdomenech P."/>
            <person name="De Simone V."/>
            <person name="Choisne N."/>
            <person name="Artiguenave F."/>
            <person name="Robert C."/>
            <person name="Brottier P."/>
            <person name="Wincker P."/>
            <person name="Cattolico L."/>
            <person name="Weissenbach J."/>
            <person name="Saurin W."/>
            <person name="Quetier F."/>
            <person name="Schaefer M."/>
            <person name="Mueller-Auer S."/>
            <person name="Gabel C."/>
            <person name="Fuchs M."/>
            <person name="Benes V."/>
            <person name="Wurmbach E."/>
            <person name="Drzonek H."/>
            <person name="Erfle H."/>
            <person name="Jordan N."/>
            <person name="Bangert S."/>
            <person name="Wiedelmann R."/>
            <person name="Kranz H."/>
            <person name="Voss H."/>
            <person name="Holland R."/>
            <person name="Brandt P."/>
            <person name="Nyakatura G."/>
            <person name="Vezzi A."/>
            <person name="D'Angelo M."/>
            <person name="Pallavicini A."/>
            <person name="Toppo S."/>
            <person name="Simionati B."/>
            <person name="Conrad A."/>
            <person name="Hornischer K."/>
            <person name="Kauer G."/>
            <person name="Loehnert T.-H."/>
            <person name="Nordsiek G."/>
            <person name="Reichelt J."/>
            <person name="Scharfe M."/>
            <person name="Schoen O."/>
            <person name="Bargues M."/>
            <person name="Terol J."/>
            <person name="Climent J."/>
            <person name="Navarro P."/>
            <person name="Collado C."/>
            <person name="Perez-Perez A."/>
            <person name="Ottenwaelder B."/>
            <person name="Duchemin D."/>
            <person name="Cooke R."/>
            <person name="Laudie M."/>
            <person name="Berger-Llauro C."/>
            <person name="Purnelle B."/>
            <person name="Masuy D."/>
            <person name="de Haan M."/>
            <person name="Maarse A.C."/>
            <person name="Alcaraz J.-P."/>
            <person name="Cottet A."/>
            <person name="Casacuberta E."/>
            <person name="Monfort A."/>
            <person name="Argiriou A."/>
            <person name="Flores M."/>
            <person name="Liguori R."/>
            <person name="Vitale D."/>
            <person name="Mannhaupt G."/>
            <person name="Haase D."/>
            <person name="Schoof H."/>
            <person name="Rudd S."/>
            <person name="Zaccaria P."/>
            <person name="Mewes H.-W."/>
            <person name="Mayer K.F.X."/>
            <person name="Kaul S."/>
            <person name="Town C.D."/>
            <person name="Koo H.L."/>
            <person name="Tallon L.J."/>
            <person name="Jenkins J."/>
            <person name="Rooney T."/>
            <person name="Rizzo M."/>
            <person name="Walts A."/>
            <person name="Utterback T."/>
            <person name="Fujii C.Y."/>
            <person name="Shea T.P."/>
            <person name="Creasy T.H."/>
            <person name="Haas B."/>
            <person name="Maiti R."/>
            <person name="Wu D."/>
            <person name="Peterson J."/>
            <person name="Van Aken S."/>
            <person name="Pai G."/>
            <person name="Militscher J."/>
            <person name="Sellers P."/>
            <person name="Gill J.E."/>
            <person name="Feldblyum T.V."/>
            <person name="Preuss D."/>
            <person name="Lin X."/>
            <person name="Nierman W.C."/>
            <person name="Salzberg S.L."/>
            <person name="White O."/>
            <person name="Venter J.C."/>
            <person name="Fraser C.M."/>
            <person name="Kaneko T."/>
            <person name="Nakamura Y."/>
            <person name="Sato S."/>
            <person name="Kato T."/>
            <person name="Asamizu E."/>
            <person name="Sasamoto S."/>
            <person name="Kimura T."/>
            <person name="Idesawa K."/>
            <person name="Kawashima K."/>
            <person name="Kishida Y."/>
            <person name="Kiyokawa C."/>
            <person name="Kohara M."/>
            <person name="Matsumoto M."/>
            <person name="Matsuno A."/>
            <person name="Muraki A."/>
            <person name="Nakayama S."/>
            <person name="Nakazaki N."/>
            <person name="Shinpo S."/>
            <person name="Takeuchi C."/>
            <person name="Wada T."/>
            <person name="Watanabe A."/>
            <person name="Yamada M."/>
            <person name="Yasuda M."/>
            <person name="Tabata S."/>
        </authorList>
    </citation>
    <scope>NUCLEOTIDE SEQUENCE [LARGE SCALE GENOMIC DNA]</scope>
    <source>
        <strain>cv. Columbia</strain>
    </source>
</reference>
<reference key="2">
    <citation type="journal article" date="2017" name="Plant J.">
        <title>Araport11: a complete reannotation of the Arabidopsis thaliana reference genome.</title>
        <authorList>
            <person name="Cheng C.Y."/>
            <person name="Krishnakumar V."/>
            <person name="Chan A.P."/>
            <person name="Thibaud-Nissen F."/>
            <person name="Schobel S."/>
            <person name="Town C.D."/>
        </authorList>
    </citation>
    <scope>GENOME REANNOTATION</scope>
    <source>
        <strain>cv. Columbia</strain>
    </source>
</reference>
<reference key="3">
    <citation type="submission" date="2006-11" db="EMBL/GenBank/DDBJ databases">
        <title>Arabidopsis ORF clones.</title>
        <authorList>
            <person name="Bautista V.R."/>
            <person name="Kim C.J."/>
            <person name="Chen H."/>
            <person name="Quinitio C."/>
            <person name="Ecker J.R."/>
        </authorList>
    </citation>
    <scope>NUCLEOTIDE SEQUENCE [LARGE SCALE MRNA]</scope>
    <source>
        <strain>cv. Columbia</strain>
    </source>
</reference>
<reference key="4">
    <citation type="journal article" date="2003" name="New Phytol.">
        <title>Calmodulins and related potential calcium sensors of Arabidopsis.</title>
        <authorList>
            <person name="McCormack E."/>
            <person name="Braam J."/>
        </authorList>
    </citation>
    <scope>GENE FAMILY</scope>
    <scope>NOMENCLATURE</scope>
</reference>
<gene>
    <name type="primary">CML28</name>
    <name type="ordered locus">At3g03430</name>
    <name type="ORF">T21P5.15</name>
</gene>